<proteinExistence type="inferred from homology"/>
<name>AROB_XANOM</name>
<accession>Q2P6C9</accession>
<organism>
    <name type="scientific">Xanthomonas oryzae pv. oryzae (strain MAFF 311018)</name>
    <dbReference type="NCBI Taxonomy" id="342109"/>
    <lineage>
        <taxon>Bacteria</taxon>
        <taxon>Pseudomonadati</taxon>
        <taxon>Pseudomonadota</taxon>
        <taxon>Gammaproteobacteria</taxon>
        <taxon>Lysobacterales</taxon>
        <taxon>Lysobacteraceae</taxon>
        <taxon>Xanthomonas</taxon>
    </lineage>
</organism>
<keyword id="KW-0028">Amino-acid biosynthesis</keyword>
<keyword id="KW-0057">Aromatic amino acid biosynthesis</keyword>
<keyword id="KW-0170">Cobalt</keyword>
<keyword id="KW-0963">Cytoplasm</keyword>
<keyword id="KW-0456">Lyase</keyword>
<keyword id="KW-0479">Metal-binding</keyword>
<keyword id="KW-0520">NAD</keyword>
<keyword id="KW-0547">Nucleotide-binding</keyword>
<keyword id="KW-0862">Zinc</keyword>
<gene>
    <name evidence="1" type="primary">aroB</name>
    <name type="ordered locus">XOO1143</name>
</gene>
<dbReference type="EC" id="4.2.3.4" evidence="1"/>
<dbReference type="EMBL" id="AP008229">
    <property type="protein sequence ID" value="BAE67898.1"/>
    <property type="molecule type" value="Genomic_DNA"/>
</dbReference>
<dbReference type="RefSeq" id="WP_011407865.1">
    <property type="nucleotide sequence ID" value="NC_007705.1"/>
</dbReference>
<dbReference type="SMR" id="Q2P6C9"/>
<dbReference type="KEGG" id="xom:XOO1143"/>
<dbReference type="HOGENOM" id="CLU_001201_0_2_6"/>
<dbReference type="UniPathway" id="UPA00053">
    <property type="reaction ID" value="UER00085"/>
</dbReference>
<dbReference type="GO" id="GO:0005737">
    <property type="term" value="C:cytoplasm"/>
    <property type="evidence" value="ECO:0007669"/>
    <property type="project" value="UniProtKB-SubCell"/>
</dbReference>
<dbReference type="GO" id="GO:0003856">
    <property type="term" value="F:3-dehydroquinate synthase activity"/>
    <property type="evidence" value="ECO:0007669"/>
    <property type="project" value="UniProtKB-UniRule"/>
</dbReference>
<dbReference type="GO" id="GO:0046872">
    <property type="term" value="F:metal ion binding"/>
    <property type="evidence" value="ECO:0007669"/>
    <property type="project" value="UniProtKB-KW"/>
</dbReference>
<dbReference type="GO" id="GO:0000166">
    <property type="term" value="F:nucleotide binding"/>
    <property type="evidence" value="ECO:0007669"/>
    <property type="project" value="UniProtKB-KW"/>
</dbReference>
<dbReference type="GO" id="GO:0008652">
    <property type="term" value="P:amino acid biosynthetic process"/>
    <property type="evidence" value="ECO:0007669"/>
    <property type="project" value="UniProtKB-KW"/>
</dbReference>
<dbReference type="GO" id="GO:0009073">
    <property type="term" value="P:aromatic amino acid family biosynthetic process"/>
    <property type="evidence" value="ECO:0007669"/>
    <property type="project" value="UniProtKB-KW"/>
</dbReference>
<dbReference type="GO" id="GO:0009423">
    <property type="term" value="P:chorismate biosynthetic process"/>
    <property type="evidence" value="ECO:0007669"/>
    <property type="project" value="UniProtKB-UniRule"/>
</dbReference>
<dbReference type="CDD" id="cd08195">
    <property type="entry name" value="DHQS"/>
    <property type="match status" value="1"/>
</dbReference>
<dbReference type="FunFam" id="3.40.50.1970:FF:000023">
    <property type="entry name" value="3-dehydroquinate synthase"/>
    <property type="match status" value="1"/>
</dbReference>
<dbReference type="Gene3D" id="3.40.50.1970">
    <property type="match status" value="1"/>
</dbReference>
<dbReference type="Gene3D" id="1.20.1090.10">
    <property type="entry name" value="Dehydroquinate synthase-like - alpha domain"/>
    <property type="match status" value="1"/>
</dbReference>
<dbReference type="HAMAP" id="MF_00110">
    <property type="entry name" value="DHQ_synthase"/>
    <property type="match status" value="1"/>
</dbReference>
<dbReference type="InterPro" id="IPR050071">
    <property type="entry name" value="Dehydroquinate_synthase"/>
</dbReference>
<dbReference type="InterPro" id="IPR016037">
    <property type="entry name" value="DHQ_synth_AroB"/>
</dbReference>
<dbReference type="InterPro" id="IPR030963">
    <property type="entry name" value="DHQ_synth_fam"/>
</dbReference>
<dbReference type="InterPro" id="IPR030960">
    <property type="entry name" value="DHQS/DOIS_N"/>
</dbReference>
<dbReference type="InterPro" id="IPR056179">
    <property type="entry name" value="DHQS_C"/>
</dbReference>
<dbReference type="NCBIfam" id="TIGR01357">
    <property type="entry name" value="aroB"/>
    <property type="match status" value="1"/>
</dbReference>
<dbReference type="PANTHER" id="PTHR43622">
    <property type="entry name" value="3-DEHYDROQUINATE SYNTHASE"/>
    <property type="match status" value="1"/>
</dbReference>
<dbReference type="PANTHER" id="PTHR43622:SF7">
    <property type="entry name" value="3-DEHYDROQUINATE SYNTHASE, CHLOROPLASTIC"/>
    <property type="match status" value="1"/>
</dbReference>
<dbReference type="Pfam" id="PF01761">
    <property type="entry name" value="DHQ_synthase"/>
    <property type="match status" value="1"/>
</dbReference>
<dbReference type="Pfam" id="PF24621">
    <property type="entry name" value="DHQS_C"/>
    <property type="match status" value="1"/>
</dbReference>
<dbReference type="PIRSF" id="PIRSF001455">
    <property type="entry name" value="DHQ_synth"/>
    <property type="match status" value="1"/>
</dbReference>
<dbReference type="SUPFAM" id="SSF56796">
    <property type="entry name" value="Dehydroquinate synthase-like"/>
    <property type="match status" value="1"/>
</dbReference>
<protein>
    <recommendedName>
        <fullName evidence="1">3-dehydroquinate synthase</fullName>
        <shortName evidence="1">DHQS</shortName>
        <ecNumber evidence="1">4.2.3.4</ecNumber>
    </recommendedName>
</protein>
<reference key="1">
    <citation type="journal article" date="2005" name="Jpn. Agric. Res. Q.">
        <title>Genome sequence of Xanthomonas oryzae pv. oryzae suggests contribution of large numbers of effector genes and insertion sequences to its race diversity.</title>
        <authorList>
            <person name="Ochiai H."/>
            <person name="Inoue Y."/>
            <person name="Takeya M."/>
            <person name="Sasaki A."/>
            <person name="Kaku H."/>
        </authorList>
    </citation>
    <scope>NUCLEOTIDE SEQUENCE [LARGE SCALE GENOMIC DNA]</scope>
    <source>
        <strain>MAFF 311018</strain>
    </source>
</reference>
<comment type="function">
    <text evidence="1">Catalyzes the conversion of 3-deoxy-D-arabino-heptulosonate 7-phosphate (DAHP) to dehydroquinate (DHQ).</text>
</comment>
<comment type="catalytic activity">
    <reaction evidence="1">
        <text>7-phospho-2-dehydro-3-deoxy-D-arabino-heptonate = 3-dehydroquinate + phosphate</text>
        <dbReference type="Rhea" id="RHEA:21968"/>
        <dbReference type="ChEBI" id="CHEBI:32364"/>
        <dbReference type="ChEBI" id="CHEBI:43474"/>
        <dbReference type="ChEBI" id="CHEBI:58394"/>
        <dbReference type="EC" id="4.2.3.4"/>
    </reaction>
</comment>
<comment type="cofactor">
    <cofactor evidence="1">
        <name>Co(2+)</name>
        <dbReference type="ChEBI" id="CHEBI:48828"/>
    </cofactor>
    <cofactor evidence="1">
        <name>Zn(2+)</name>
        <dbReference type="ChEBI" id="CHEBI:29105"/>
    </cofactor>
    <text evidence="1">Binds 1 divalent metal cation per subunit. Can use either Co(2+) or Zn(2+).</text>
</comment>
<comment type="cofactor">
    <cofactor evidence="1">
        <name>NAD(+)</name>
        <dbReference type="ChEBI" id="CHEBI:57540"/>
    </cofactor>
</comment>
<comment type="pathway">
    <text evidence="1">Metabolic intermediate biosynthesis; chorismate biosynthesis; chorismate from D-erythrose 4-phosphate and phosphoenolpyruvate: step 2/7.</text>
</comment>
<comment type="subcellular location">
    <subcellularLocation>
        <location evidence="1">Cytoplasm</location>
    </subcellularLocation>
</comment>
<comment type="similarity">
    <text evidence="1">Belongs to the sugar phosphate cyclases superfamily. Dehydroquinate synthase family.</text>
</comment>
<sequence length="370" mass="38812">MTLPRSSRSVAVDGAQPYTITIAPGLLADGARLARHVRGRHALLLSDSQVAPHYAAGVRAALLSARPDLQIGELVIAAGEASKTLDTFGSAITALAELGATRDACVFALGGGVVGDLAGFAAACWMRGVDCVQLPTSLLAMVDSSVGGKTAVDIPQGKNLVGAFHPPRAVLADTDTLRTLPARELRAGLAEVIKYGAIRDPLFFQWLHAERHALLDSDPAALAQAIARSCEHKAEIVARDPLEKGERALLNLGHTFGHAIETEQGYGAPGNDNLNHGEAVAVGMVLAARLSATLGMSNAQDTEALRALLHDFELPTDIPPGLPPEALLARMRLDKKNIAGRLRLVLWRGIGKAEVVPDVEEAAVLKILAG</sequence>
<feature type="chain" id="PRO_1000094654" description="3-dehydroquinate synthase">
    <location>
        <begin position="1"/>
        <end position="370"/>
    </location>
</feature>
<feature type="binding site" evidence="1">
    <location>
        <begin position="112"/>
        <end position="116"/>
    </location>
    <ligand>
        <name>NAD(+)</name>
        <dbReference type="ChEBI" id="CHEBI:57540"/>
    </ligand>
</feature>
<feature type="binding site" evidence="1">
    <location>
        <begin position="136"/>
        <end position="137"/>
    </location>
    <ligand>
        <name>NAD(+)</name>
        <dbReference type="ChEBI" id="CHEBI:57540"/>
    </ligand>
</feature>
<feature type="binding site" evidence="1">
    <location>
        <position position="149"/>
    </location>
    <ligand>
        <name>NAD(+)</name>
        <dbReference type="ChEBI" id="CHEBI:57540"/>
    </ligand>
</feature>
<feature type="binding site" evidence="1">
    <location>
        <position position="158"/>
    </location>
    <ligand>
        <name>NAD(+)</name>
        <dbReference type="ChEBI" id="CHEBI:57540"/>
    </ligand>
</feature>
<feature type="binding site" evidence="1">
    <location>
        <begin position="176"/>
        <end position="179"/>
    </location>
    <ligand>
        <name>NAD(+)</name>
        <dbReference type="ChEBI" id="CHEBI:57540"/>
    </ligand>
</feature>
<feature type="binding site" evidence="1">
    <location>
        <position position="191"/>
    </location>
    <ligand>
        <name>Zn(2+)</name>
        <dbReference type="ChEBI" id="CHEBI:29105"/>
    </ligand>
</feature>
<feature type="binding site" evidence="1">
    <location>
        <position position="254"/>
    </location>
    <ligand>
        <name>Zn(2+)</name>
        <dbReference type="ChEBI" id="CHEBI:29105"/>
    </ligand>
</feature>
<feature type="binding site" evidence="1">
    <location>
        <position position="276"/>
    </location>
    <ligand>
        <name>Zn(2+)</name>
        <dbReference type="ChEBI" id="CHEBI:29105"/>
    </ligand>
</feature>
<evidence type="ECO:0000255" key="1">
    <source>
        <dbReference type="HAMAP-Rule" id="MF_00110"/>
    </source>
</evidence>